<sequence>MSKYSGEEFSNNGDFYDDFAHTGDPALDMEYERNYYASRMPENVKYFLMNFCQAVKEGNLYDIQNMYENTFPQISDHHFDKSSWPEETEVGALVENDKVFMILYKELYYRHIHARIPGGPKLDQRINSFFNYCDFFNLIISAPNPVMLELPDIWLWELVDEFVYQFQNFAQYRARLTDKSQEEIQQLCVNHSNVWSILCILNVLHSLVDISNIKKQLEAISGGIDPNTVSGDFGKLSFYKMLGYFSLVGLLRVHSLLGDYYQAIKVLEPIEIHKKSAYSHIPACQISTSYYVGFAYMMMRRYADAIRTFSDILLYIQRTKQLYSTRSYQNDQINKQAEQMYHLLAICLVLHPQCIDESIQQVLREKNYHDAMFKMQCGDLEVFKSFFVFACPRFVSPCPPAADAPMEDYVKDPMEHQLQVFMDEVRQQKDLPTTRSYLKLYTTLPLAKLASFIDPNANDDDVSKLLIRLLCFKHKMRNLVWSKGPSGLEGTFKSGSELDFYIDDDMIHIADTKVSHRYGDFFVRKIMKFNDLNRKLKNINI</sequence>
<reference key="1">
    <citation type="journal article" date="2005" name="Genome Res.">
        <title>Comparative genome sequencing of Drosophila pseudoobscura: chromosomal, gene, and cis-element evolution.</title>
        <authorList>
            <person name="Richards S."/>
            <person name="Liu Y."/>
            <person name="Bettencourt B.R."/>
            <person name="Hradecky P."/>
            <person name="Letovsky S."/>
            <person name="Nielsen R."/>
            <person name="Thornton K."/>
            <person name="Hubisz M.J."/>
            <person name="Chen R."/>
            <person name="Meisel R.P."/>
            <person name="Couronne O."/>
            <person name="Hua S."/>
            <person name="Smith M.A."/>
            <person name="Zhang P."/>
            <person name="Liu J."/>
            <person name="Bussemaker H.J."/>
            <person name="van Batenburg M.F."/>
            <person name="Howells S.L."/>
            <person name="Scherer S.E."/>
            <person name="Sodergren E."/>
            <person name="Matthews B.B."/>
            <person name="Crosby M.A."/>
            <person name="Schroeder A.J."/>
            <person name="Ortiz-Barrientos D."/>
            <person name="Rives C.M."/>
            <person name="Metzker M.L."/>
            <person name="Muzny D.M."/>
            <person name="Scott G."/>
            <person name="Steffen D."/>
            <person name="Wheeler D.A."/>
            <person name="Worley K.C."/>
            <person name="Havlak P."/>
            <person name="Durbin K.J."/>
            <person name="Egan A."/>
            <person name="Gill R."/>
            <person name="Hume J."/>
            <person name="Morgan M.B."/>
            <person name="Miner G."/>
            <person name="Hamilton C."/>
            <person name="Huang Y."/>
            <person name="Waldron L."/>
            <person name="Verduzco D."/>
            <person name="Clerc-Blankenburg K.P."/>
            <person name="Dubchak I."/>
            <person name="Noor M.A.F."/>
            <person name="Anderson W."/>
            <person name="White K.P."/>
            <person name="Clark A.G."/>
            <person name="Schaeffer S.W."/>
            <person name="Gelbart W.M."/>
            <person name="Weinstock G.M."/>
            <person name="Gibbs R.A."/>
        </authorList>
    </citation>
    <scope>NUCLEOTIDE SEQUENCE [LARGE SCALE GENOMIC DNA]</scope>
    <source>
        <strain>MV2-25 / Tucson 14011-0121.94</strain>
    </source>
</reference>
<accession>Q2M0S3</accession>
<keyword id="KW-0963">Cytoplasm</keyword>
<keyword id="KW-0396">Initiation factor</keyword>
<keyword id="KW-0648">Protein biosynthesis</keyword>
<keyword id="KW-1185">Reference proteome</keyword>
<proteinExistence type="inferred from homology"/>
<evidence type="ECO:0000255" key="1">
    <source>
        <dbReference type="HAMAP-Rule" id="MF_03011"/>
    </source>
</evidence>
<evidence type="ECO:0000255" key="2">
    <source>
        <dbReference type="PROSITE-ProRule" id="PRU01185"/>
    </source>
</evidence>
<dbReference type="EMBL" id="CH379069">
    <property type="protein sequence ID" value="EAL30856.1"/>
    <property type="molecule type" value="Genomic_DNA"/>
</dbReference>
<dbReference type="SMR" id="Q2M0S3"/>
<dbReference type="FunCoup" id="Q2M0S3">
    <property type="interactions" value="2034"/>
</dbReference>
<dbReference type="STRING" id="46245.Q2M0S3"/>
<dbReference type="EnsemblMetazoa" id="FBtr0276191">
    <property type="protein sequence ID" value="FBpp0274629"/>
    <property type="gene ID" value="FBgn0079023"/>
</dbReference>
<dbReference type="KEGG" id="dpo:4813755"/>
<dbReference type="CTD" id="51386"/>
<dbReference type="eggNOG" id="KOG3677">
    <property type="taxonomic scope" value="Eukaryota"/>
</dbReference>
<dbReference type="HOGENOM" id="CLU_029210_0_1_1"/>
<dbReference type="InParanoid" id="Q2M0S3"/>
<dbReference type="OMA" id="AGWFIRN"/>
<dbReference type="PhylomeDB" id="Q2M0S3"/>
<dbReference type="Proteomes" id="UP000001819">
    <property type="component" value="Chromosome X"/>
</dbReference>
<dbReference type="Bgee" id="FBgn0079023">
    <property type="expression patterns" value="Expressed in female reproductive system and 2 other cell types or tissues"/>
</dbReference>
<dbReference type="GO" id="GO:0016282">
    <property type="term" value="C:eukaryotic 43S preinitiation complex"/>
    <property type="evidence" value="ECO:0007669"/>
    <property type="project" value="UniProtKB-UniRule"/>
</dbReference>
<dbReference type="GO" id="GO:0033290">
    <property type="term" value="C:eukaryotic 48S preinitiation complex"/>
    <property type="evidence" value="ECO:0007669"/>
    <property type="project" value="UniProtKB-UniRule"/>
</dbReference>
<dbReference type="GO" id="GO:0005852">
    <property type="term" value="C:eukaryotic translation initiation factor 3 complex"/>
    <property type="evidence" value="ECO:0007669"/>
    <property type="project" value="UniProtKB-UniRule"/>
</dbReference>
<dbReference type="GO" id="GO:0003743">
    <property type="term" value="F:translation initiation factor activity"/>
    <property type="evidence" value="ECO:0007669"/>
    <property type="project" value="UniProtKB-UniRule"/>
</dbReference>
<dbReference type="GO" id="GO:0001732">
    <property type="term" value="P:formation of cytoplasmic translation initiation complex"/>
    <property type="evidence" value="ECO:0007669"/>
    <property type="project" value="UniProtKB-UniRule"/>
</dbReference>
<dbReference type="HAMAP" id="MF_03011">
    <property type="entry name" value="eIF3l"/>
    <property type="match status" value="1"/>
</dbReference>
<dbReference type="InterPro" id="IPR019382">
    <property type="entry name" value="eIF3l"/>
</dbReference>
<dbReference type="InterPro" id="IPR000717">
    <property type="entry name" value="PCI_dom"/>
</dbReference>
<dbReference type="InterPro" id="IPR011990">
    <property type="entry name" value="TPR-like_helical_dom_sf"/>
</dbReference>
<dbReference type="PANTHER" id="PTHR13242">
    <property type="entry name" value="EUKARYOTIC TRANSLATION INITIATION FACTOR 3"/>
    <property type="match status" value="1"/>
</dbReference>
<dbReference type="PANTHER" id="PTHR13242:SF0">
    <property type="entry name" value="EUKARYOTIC TRANSLATION INITIATION FACTOR 3 SUBUNIT L"/>
    <property type="match status" value="1"/>
</dbReference>
<dbReference type="Pfam" id="PF10255">
    <property type="entry name" value="Paf67"/>
    <property type="match status" value="1"/>
</dbReference>
<dbReference type="SUPFAM" id="SSF48452">
    <property type="entry name" value="TPR-like"/>
    <property type="match status" value="1"/>
</dbReference>
<dbReference type="PROSITE" id="PS50250">
    <property type="entry name" value="PCI"/>
    <property type="match status" value="1"/>
</dbReference>
<gene>
    <name type="ORF">GA19025</name>
</gene>
<name>EIF3L_DROPS</name>
<feature type="chain" id="PRO_0000364248" description="Eukaryotic translation initiation factor 3 subunit L">
    <location>
        <begin position="1"/>
        <end position="541"/>
    </location>
</feature>
<feature type="domain" description="PCI" evidence="2">
    <location>
        <begin position="308"/>
        <end position="516"/>
    </location>
</feature>
<protein>
    <recommendedName>
        <fullName evidence="1">Eukaryotic translation initiation factor 3 subunit L</fullName>
        <shortName evidence="1">eIF3l</shortName>
    </recommendedName>
</protein>
<comment type="function">
    <text evidence="1">Component of the eukaryotic translation initiation factor 3 (eIF-3) complex, which is involved in protein synthesis of a specialized repertoire of mRNAs and, together with other initiation factors, stimulates binding of mRNA and methionyl-tRNAi to the 40S ribosome. The eIF-3 complex specifically targets and initiates translation of a subset of mRNAs involved in cell proliferation.</text>
</comment>
<comment type="subunit">
    <text evidence="1">Component of the eukaryotic translation initiation factor 3 (eIF-3) complex. The eIF-3 complex interacts with pix.</text>
</comment>
<comment type="subcellular location">
    <subcellularLocation>
        <location evidence="1">Cytoplasm</location>
    </subcellularLocation>
</comment>
<comment type="similarity">
    <text evidence="1">Belongs to the eIF-3 subunit L family.</text>
</comment>
<organism>
    <name type="scientific">Drosophila pseudoobscura pseudoobscura</name>
    <name type="common">Fruit fly</name>
    <dbReference type="NCBI Taxonomy" id="46245"/>
    <lineage>
        <taxon>Eukaryota</taxon>
        <taxon>Metazoa</taxon>
        <taxon>Ecdysozoa</taxon>
        <taxon>Arthropoda</taxon>
        <taxon>Hexapoda</taxon>
        <taxon>Insecta</taxon>
        <taxon>Pterygota</taxon>
        <taxon>Neoptera</taxon>
        <taxon>Endopterygota</taxon>
        <taxon>Diptera</taxon>
        <taxon>Brachycera</taxon>
        <taxon>Muscomorpha</taxon>
        <taxon>Ephydroidea</taxon>
        <taxon>Drosophilidae</taxon>
        <taxon>Drosophila</taxon>
        <taxon>Sophophora</taxon>
    </lineage>
</organism>